<name>MNME_BACVZ</name>
<reference key="1">
    <citation type="journal article" date="2007" name="Nat. Biotechnol.">
        <title>Comparative analysis of the complete genome sequence of the plant growth-promoting bacterium Bacillus amyloliquefaciens FZB42.</title>
        <authorList>
            <person name="Chen X.H."/>
            <person name="Koumoutsi A."/>
            <person name="Scholz R."/>
            <person name="Eisenreich A."/>
            <person name="Schneider K."/>
            <person name="Heinemeyer I."/>
            <person name="Morgenstern B."/>
            <person name="Voss B."/>
            <person name="Hess W.R."/>
            <person name="Reva O."/>
            <person name="Junge H."/>
            <person name="Voigt B."/>
            <person name="Jungblut P.R."/>
            <person name="Vater J."/>
            <person name="Suessmuth R."/>
            <person name="Liesegang H."/>
            <person name="Strittmatter A."/>
            <person name="Gottschalk G."/>
            <person name="Borriss R."/>
        </authorList>
    </citation>
    <scope>NUCLEOTIDE SEQUENCE [LARGE SCALE GENOMIC DNA]</scope>
    <source>
        <strain>DSM 23117 / BGSC 10A6 / LMG 26770 / FZB42</strain>
    </source>
</reference>
<sequence>MDTIAAISTPMGEGAIAIVRLSGPEAVKIADKMYKGPKGKTLSSAESHTIHYGHIADSTTGRIIEEVMVSVLRAPRTFTREDVIEINCHGGIVTVNQVLQLALREGARLAEPGEFTKRAFLNGRIDLSQAEAVMDLIRAKTDRAMNVAMNQMEGRLSALVRRLRDELLETLAHVEVNIDYPEYDDVEEMTHQLLVEKASGVKKEIEALLRTSEQGKILREGLSTVIIGRPNVGKSSLLNSLVHETKAIVTDIPGTTRDVIEEYVNVRGVPLRLVDTAGIRETEDIVERIGVERSRQVLKEADLILLVLNHSEELSEEDVKLFEAVEGMDVIVIMNKTDLEAKIDAERVKELAKGRPVVTTSLLKEEGIQDLEEAIQSLFYTGAIESGDLTYVSNTRHISILHQAKQAIDDALNGIEQDVPIDMVQIDLTRCWELLGEIIGDAVHESLIDQLFSQFCLGK</sequence>
<proteinExistence type="inferred from homology"/>
<protein>
    <recommendedName>
        <fullName evidence="1">tRNA modification GTPase MnmE</fullName>
        <ecNumber evidence="1">3.6.-.-</ecNumber>
    </recommendedName>
</protein>
<keyword id="KW-0963">Cytoplasm</keyword>
<keyword id="KW-0342">GTP-binding</keyword>
<keyword id="KW-0378">Hydrolase</keyword>
<keyword id="KW-0460">Magnesium</keyword>
<keyword id="KW-0479">Metal-binding</keyword>
<keyword id="KW-0547">Nucleotide-binding</keyword>
<keyword id="KW-0630">Potassium</keyword>
<keyword id="KW-0819">tRNA processing</keyword>
<feature type="chain" id="PRO_0000345711" description="tRNA modification GTPase MnmE">
    <location>
        <begin position="1"/>
        <end position="459"/>
    </location>
</feature>
<feature type="domain" description="TrmE-type G">
    <location>
        <begin position="221"/>
        <end position="380"/>
    </location>
</feature>
<feature type="binding site" evidence="1">
    <location>
        <position position="20"/>
    </location>
    <ligand>
        <name>(6S)-5-formyl-5,6,7,8-tetrahydrofolate</name>
        <dbReference type="ChEBI" id="CHEBI:57457"/>
    </ligand>
</feature>
<feature type="binding site" evidence="1">
    <location>
        <position position="85"/>
    </location>
    <ligand>
        <name>(6S)-5-formyl-5,6,7,8-tetrahydrofolate</name>
        <dbReference type="ChEBI" id="CHEBI:57457"/>
    </ligand>
</feature>
<feature type="binding site" evidence="1">
    <location>
        <position position="124"/>
    </location>
    <ligand>
        <name>(6S)-5-formyl-5,6,7,8-tetrahydrofolate</name>
        <dbReference type="ChEBI" id="CHEBI:57457"/>
    </ligand>
</feature>
<feature type="binding site" evidence="1">
    <location>
        <begin position="231"/>
        <end position="236"/>
    </location>
    <ligand>
        <name>GTP</name>
        <dbReference type="ChEBI" id="CHEBI:37565"/>
    </ligand>
</feature>
<feature type="binding site" evidence="1">
    <location>
        <position position="231"/>
    </location>
    <ligand>
        <name>K(+)</name>
        <dbReference type="ChEBI" id="CHEBI:29103"/>
    </ligand>
</feature>
<feature type="binding site" evidence="1">
    <location>
        <position position="235"/>
    </location>
    <ligand>
        <name>Mg(2+)</name>
        <dbReference type="ChEBI" id="CHEBI:18420"/>
    </ligand>
</feature>
<feature type="binding site" evidence="1">
    <location>
        <begin position="250"/>
        <end position="256"/>
    </location>
    <ligand>
        <name>GTP</name>
        <dbReference type="ChEBI" id="CHEBI:37565"/>
    </ligand>
</feature>
<feature type="binding site" evidence="1">
    <location>
        <position position="250"/>
    </location>
    <ligand>
        <name>K(+)</name>
        <dbReference type="ChEBI" id="CHEBI:29103"/>
    </ligand>
</feature>
<feature type="binding site" evidence="1">
    <location>
        <position position="252"/>
    </location>
    <ligand>
        <name>K(+)</name>
        <dbReference type="ChEBI" id="CHEBI:29103"/>
    </ligand>
</feature>
<feature type="binding site" evidence="1">
    <location>
        <position position="255"/>
    </location>
    <ligand>
        <name>K(+)</name>
        <dbReference type="ChEBI" id="CHEBI:29103"/>
    </ligand>
</feature>
<feature type="binding site" evidence="1">
    <location>
        <position position="256"/>
    </location>
    <ligand>
        <name>Mg(2+)</name>
        <dbReference type="ChEBI" id="CHEBI:18420"/>
    </ligand>
</feature>
<feature type="binding site" evidence="1">
    <location>
        <begin position="275"/>
        <end position="278"/>
    </location>
    <ligand>
        <name>GTP</name>
        <dbReference type="ChEBI" id="CHEBI:37565"/>
    </ligand>
</feature>
<feature type="binding site" evidence="1">
    <location>
        <position position="459"/>
    </location>
    <ligand>
        <name>(6S)-5-formyl-5,6,7,8-tetrahydrofolate</name>
        <dbReference type="ChEBI" id="CHEBI:57457"/>
    </ligand>
</feature>
<evidence type="ECO:0000255" key="1">
    <source>
        <dbReference type="HAMAP-Rule" id="MF_00379"/>
    </source>
</evidence>
<comment type="function">
    <text evidence="1">Exhibits a very high intrinsic GTPase hydrolysis rate. Involved in the addition of a carboxymethylaminomethyl (cmnm) group at the wobble position (U34) of certain tRNAs, forming tRNA-cmnm(5)s(2)U34.</text>
</comment>
<comment type="cofactor">
    <cofactor evidence="1">
        <name>K(+)</name>
        <dbReference type="ChEBI" id="CHEBI:29103"/>
    </cofactor>
    <text evidence="1">Binds 1 potassium ion per subunit.</text>
</comment>
<comment type="subunit">
    <text evidence="1">Homodimer. Heterotetramer of two MnmE and two MnmG subunits.</text>
</comment>
<comment type="subcellular location">
    <subcellularLocation>
        <location evidence="1">Cytoplasm</location>
    </subcellularLocation>
</comment>
<comment type="similarity">
    <text evidence="1">Belongs to the TRAFAC class TrmE-Era-EngA-EngB-Septin-like GTPase superfamily. TrmE GTPase family.</text>
</comment>
<accession>A7ZAW1</accession>
<organism>
    <name type="scientific">Bacillus velezensis (strain DSM 23117 / BGSC 10A6 / LMG 26770 / FZB42)</name>
    <name type="common">Bacillus amyloliquefaciens subsp. plantarum</name>
    <dbReference type="NCBI Taxonomy" id="326423"/>
    <lineage>
        <taxon>Bacteria</taxon>
        <taxon>Bacillati</taxon>
        <taxon>Bacillota</taxon>
        <taxon>Bacilli</taxon>
        <taxon>Bacillales</taxon>
        <taxon>Bacillaceae</taxon>
        <taxon>Bacillus</taxon>
        <taxon>Bacillus amyloliquefaciens group</taxon>
    </lineage>
</organism>
<dbReference type="EC" id="3.6.-.-" evidence="1"/>
<dbReference type="EMBL" id="CP000560">
    <property type="protein sequence ID" value="ABS76137.1"/>
    <property type="molecule type" value="Genomic_DNA"/>
</dbReference>
<dbReference type="RefSeq" id="WP_007409903.1">
    <property type="nucleotide sequence ID" value="NC_009725.2"/>
</dbReference>
<dbReference type="SMR" id="A7ZAW1"/>
<dbReference type="GeneID" id="93082946"/>
<dbReference type="KEGG" id="bay:RBAM_038120"/>
<dbReference type="HOGENOM" id="CLU_019624_4_1_9"/>
<dbReference type="Proteomes" id="UP000001120">
    <property type="component" value="Chromosome"/>
</dbReference>
<dbReference type="GO" id="GO:0005829">
    <property type="term" value="C:cytosol"/>
    <property type="evidence" value="ECO:0007669"/>
    <property type="project" value="TreeGrafter"/>
</dbReference>
<dbReference type="GO" id="GO:0005525">
    <property type="term" value="F:GTP binding"/>
    <property type="evidence" value="ECO:0007669"/>
    <property type="project" value="UniProtKB-UniRule"/>
</dbReference>
<dbReference type="GO" id="GO:0003924">
    <property type="term" value="F:GTPase activity"/>
    <property type="evidence" value="ECO:0007669"/>
    <property type="project" value="UniProtKB-UniRule"/>
</dbReference>
<dbReference type="GO" id="GO:0046872">
    <property type="term" value="F:metal ion binding"/>
    <property type="evidence" value="ECO:0007669"/>
    <property type="project" value="UniProtKB-KW"/>
</dbReference>
<dbReference type="GO" id="GO:0030488">
    <property type="term" value="P:tRNA methylation"/>
    <property type="evidence" value="ECO:0007669"/>
    <property type="project" value="TreeGrafter"/>
</dbReference>
<dbReference type="GO" id="GO:0002098">
    <property type="term" value="P:tRNA wobble uridine modification"/>
    <property type="evidence" value="ECO:0007669"/>
    <property type="project" value="TreeGrafter"/>
</dbReference>
<dbReference type="CDD" id="cd04164">
    <property type="entry name" value="trmE"/>
    <property type="match status" value="1"/>
</dbReference>
<dbReference type="CDD" id="cd14858">
    <property type="entry name" value="TrmE_N"/>
    <property type="match status" value="1"/>
</dbReference>
<dbReference type="FunFam" id="3.30.1360.120:FF:000003">
    <property type="entry name" value="tRNA modification GTPase MnmE"/>
    <property type="match status" value="1"/>
</dbReference>
<dbReference type="FunFam" id="3.40.50.300:FF:000494">
    <property type="entry name" value="tRNA modification GTPase MnmE"/>
    <property type="match status" value="1"/>
</dbReference>
<dbReference type="Gene3D" id="3.40.50.300">
    <property type="entry name" value="P-loop containing nucleotide triphosphate hydrolases"/>
    <property type="match status" value="1"/>
</dbReference>
<dbReference type="Gene3D" id="3.30.1360.120">
    <property type="entry name" value="Probable tRNA modification gtpase trme, domain 1"/>
    <property type="match status" value="1"/>
</dbReference>
<dbReference type="Gene3D" id="1.20.120.430">
    <property type="entry name" value="tRNA modification GTPase MnmE domain 2"/>
    <property type="match status" value="1"/>
</dbReference>
<dbReference type="HAMAP" id="MF_00379">
    <property type="entry name" value="GTPase_MnmE"/>
    <property type="match status" value="1"/>
</dbReference>
<dbReference type="InterPro" id="IPR031168">
    <property type="entry name" value="G_TrmE"/>
</dbReference>
<dbReference type="InterPro" id="IPR006073">
    <property type="entry name" value="GTP-bd"/>
</dbReference>
<dbReference type="InterPro" id="IPR018948">
    <property type="entry name" value="GTP-bd_TrmE_N"/>
</dbReference>
<dbReference type="InterPro" id="IPR004520">
    <property type="entry name" value="GTPase_MnmE"/>
</dbReference>
<dbReference type="InterPro" id="IPR027368">
    <property type="entry name" value="MnmE_dom2"/>
</dbReference>
<dbReference type="InterPro" id="IPR025867">
    <property type="entry name" value="MnmE_helical"/>
</dbReference>
<dbReference type="InterPro" id="IPR027417">
    <property type="entry name" value="P-loop_NTPase"/>
</dbReference>
<dbReference type="InterPro" id="IPR005225">
    <property type="entry name" value="Small_GTP-bd"/>
</dbReference>
<dbReference type="InterPro" id="IPR027266">
    <property type="entry name" value="TrmE/GcvT_dom1"/>
</dbReference>
<dbReference type="NCBIfam" id="TIGR00450">
    <property type="entry name" value="mnmE_trmE_thdF"/>
    <property type="match status" value="1"/>
</dbReference>
<dbReference type="NCBIfam" id="NF003661">
    <property type="entry name" value="PRK05291.1-3"/>
    <property type="match status" value="1"/>
</dbReference>
<dbReference type="NCBIfam" id="TIGR00231">
    <property type="entry name" value="small_GTP"/>
    <property type="match status" value="1"/>
</dbReference>
<dbReference type="PANTHER" id="PTHR42714">
    <property type="entry name" value="TRNA MODIFICATION GTPASE GTPBP3"/>
    <property type="match status" value="1"/>
</dbReference>
<dbReference type="PANTHER" id="PTHR42714:SF2">
    <property type="entry name" value="TRNA MODIFICATION GTPASE GTPBP3, MITOCHONDRIAL"/>
    <property type="match status" value="1"/>
</dbReference>
<dbReference type="Pfam" id="PF01926">
    <property type="entry name" value="MMR_HSR1"/>
    <property type="match status" value="1"/>
</dbReference>
<dbReference type="Pfam" id="PF12631">
    <property type="entry name" value="MnmE_helical"/>
    <property type="match status" value="1"/>
</dbReference>
<dbReference type="Pfam" id="PF10396">
    <property type="entry name" value="TrmE_N"/>
    <property type="match status" value="1"/>
</dbReference>
<dbReference type="PRINTS" id="PR00449">
    <property type="entry name" value="RASTRNSFRMNG"/>
</dbReference>
<dbReference type="SUPFAM" id="SSF52540">
    <property type="entry name" value="P-loop containing nucleoside triphosphate hydrolases"/>
    <property type="match status" value="1"/>
</dbReference>
<dbReference type="SUPFAM" id="SSF116878">
    <property type="entry name" value="TrmE connector domain"/>
    <property type="match status" value="1"/>
</dbReference>
<dbReference type="PROSITE" id="PS51709">
    <property type="entry name" value="G_TRME"/>
    <property type="match status" value="1"/>
</dbReference>
<gene>
    <name evidence="1" type="primary">mnmE</name>
    <name evidence="1" type="synonym">trmE</name>
    <name type="ordered locus">RBAM_038120</name>
</gene>